<proteinExistence type="inferred from homology"/>
<protein>
    <recommendedName>
        <fullName evidence="1">Oxygen-dependent choline dehydrogenase</fullName>
        <shortName evidence="1">CDH</shortName>
        <shortName evidence="1">CHD</shortName>
        <ecNumber evidence="1">1.1.99.1</ecNumber>
    </recommendedName>
    <alternativeName>
        <fullName evidence="1">Betaine aldehyde dehydrogenase</fullName>
        <shortName evidence="1">BADH</shortName>
        <ecNumber evidence="1">1.2.1.8</ecNumber>
    </alternativeName>
</protein>
<dbReference type="EC" id="1.1.99.1" evidence="1"/>
<dbReference type="EC" id="1.2.1.8" evidence="1"/>
<dbReference type="EMBL" id="CP000703">
    <property type="protein sequence ID" value="ABQ50410.1"/>
    <property type="molecule type" value="Genomic_DNA"/>
</dbReference>
<dbReference type="RefSeq" id="WP_000066521.1">
    <property type="nucleotide sequence ID" value="NC_009487.1"/>
</dbReference>
<dbReference type="SMR" id="A5IW37"/>
<dbReference type="KEGG" id="saj:SaurJH9_2634"/>
<dbReference type="HOGENOM" id="CLU_002865_7_1_9"/>
<dbReference type="UniPathway" id="UPA00529">
    <property type="reaction ID" value="UER00385"/>
</dbReference>
<dbReference type="GO" id="GO:0016020">
    <property type="term" value="C:membrane"/>
    <property type="evidence" value="ECO:0007669"/>
    <property type="project" value="TreeGrafter"/>
</dbReference>
<dbReference type="GO" id="GO:0008802">
    <property type="term" value="F:betaine-aldehyde dehydrogenase (NAD+) activity"/>
    <property type="evidence" value="ECO:0007669"/>
    <property type="project" value="UniProtKB-EC"/>
</dbReference>
<dbReference type="GO" id="GO:0008812">
    <property type="term" value="F:choline dehydrogenase activity"/>
    <property type="evidence" value="ECO:0007669"/>
    <property type="project" value="UniProtKB-UniRule"/>
</dbReference>
<dbReference type="GO" id="GO:0050660">
    <property type="term" value="F:flavin adenine dinucleotide binding"/>
    <property type="evidence" value="ECO:0007669"/>
    <property type="project" value="InterPro"/>
</dbReference>
<dbReference type="GO" id="GO:0019285">
    <property type="term" value="P:glycine betaine biosynthetic process from choline"/>
    <property type="evidence" value="ECO:0007669"/>
    <property type="project" value="UniProtKB-UniRule"/>
</dbReference>
<dbReference type="Gene3D" id="3.50.50.60">
    <property type="entry name" value="FAD/NAD(P)-binding domain"/>
    <property type="match status" value="1"/>
</dbReference>
<dbReference type="Gene3D" id="3.30.560.10">
    <property type="entry name" value="Glucose Oxidase, domain 3"/>
    <property type="match status" value="1"/>
</dbReference>
<dbReference type="HAMAP" id="MF_00750">
    <property type="entry name" value="Choline_dehydrogen"/>
    <property type="match status" value="1"/>
</dbReference>
<dbReference type="InterPro" id="IPR011533">
    <property type="entry name" value="BetA"/>
</dbReference>
<dbReference type="InterPro" id="IPR036188">
    <property type="entry name" value="FAD/NAD-bd_sf"/>
</dbReference>
<dbReference type="InterPro" id="IPR012132">
    <property type="entry name" value="GMC_OxRdtase"/>
</dbReference>
<dbReference type="InterPro" id="IPR000172">
    <property type="entry name" value="GMC_OxRdtase_N"/>
</dbReference>
<dbReference type="InterPro" id="IPR007867">
    <property type="entry name" value="GMC_OxRtase_C"/>
</dbReference>
<dbReference type="NCBIfam" id="TIGR01810">
    <property type="entry name" value="betA"/>
    <property type="match status" value="1"/>
</dbReference>
<dbReference type="NCBIfam" id="NF002550">
    <property type="entry name" value="PRK02106.1"/>
    <property type="match status" value="1"/>
</dbReference>
<dbReference type="PANTHER" id="PTHR11552:SF147">
    <property type="entry name" value="CHOLINE DEHYDROGENASE, MITOCHONDRIAL"/>
    <property type="match status" value="1"/>
</dbReference>
<dbReference type="PANTHER" id="PTHR11552">
    <property type="entry name" value="GLUCOSE-METHANOL-CHOLINE GMC OXIDOREDUCTASE"/>
    <property type="match status" value="1"/>
</dbReference>
<dbReference type="Pfam" id="PF05199">
    <property type="entry name" value="GMC_oxred_C"/>
    <property type="match status" value="1"/>
</dbReference>
<dbReference type="Pfam" id="PF00732">
    <property type="entry name" value="GMC_oxred_N"/>
    <property type="match status" value="1"/>
</dbReference>
<dbReference type="PIRSF" id="PIRSF000137">
    <property type="entry name" value="Alcohol_oxidase"/>
    <property type="match status" value="1"/>
</dbReference>
<dbReference type="SUPFAM" id="SSF54373">
    <property type="entry name" value="FAD-linked reductases, C-terminal domain"/>
    <property type="match status" value="1"/>
</dbReference>
<dbReference type="SUPFAM" id="SSF51905">
    <property type="entry name" value="FAD/NAD(P)-binding domain"/>
    <property type="match status" value="1"/>
</dbReference>
<dbReference type="PROSITE" id="PS00623">
    <property type="entry name" value="GMC_OXRED_1"/>
    <property type="match status" value="1"/>
</dbReference>
<dbReference type="PROSITE" id="PS00624">
    <property type="entry name" value="GMC_OXRED_2"/>
    <property type="match status" value="1"/>
</dbReference>
<comment type="function">
    <text evidence="1">Involved in the biosynthesis of the osmoprotectant glycine betaine. Catalyzes the oxidation of choline to betaine aldehyde and betaine aldehyde to glycine betaine at the same rate.</text>
</comment>
<comment type="catalytic activity">
    <reaction evidence="1">
        <text>choline + A = betaine aldehyde + AH2</text>
        <dbReference type="Rhea" id="RHEA:17433"/>
        <dbReference type="ChEBI" id="CHEBI:13193"/>
        <dbReference type="ChEBI" id="CHEBI:15354"/>
        <dbReference type="ChEBI" id="CHEBI:15710"/>
        <dbReference type="ChEBI" id="CHEBI:17499"/>
        <dbReference type="EC" id="1.1.99.1"/>
    </reaction>
</comment>
<comment type="catalytic activity">
    <reaction evidence="1">
        <text>betaine aldehyde + NAD(+) + H2O = glycine betaine + NADH + 2 H(+)</text>
        <dbReference type="Rhea" id="RHEA:15305"/>
        <dbReference type="ChEBI" id="CHEBI:15377"/>
        <dbReference type="ChEBI" id="CHEBI:15378"/>
        <dbReference type="ChEBI" id="CHEBI:15710"/>
        <dbReference type="ChEBI" id="CHEBI:17750"/>
        <dbReference type="ChEBI" id="CHEBI:57540"/>
        <dbReference type="ChEBI" id="CHEBI:57945"/>
        <dbReference type="EC" id="1.2.1.8"/>
    </reaction>
</comment>
<comment type="cofactor">
    <cofactor evidence="1">
        <name>FAD</name>
        <dbReference type="ChEBI" id="CHEBI:57692"/>
    </cofactor>
</comment>
<comment type="pathway">
    <text evidence="1">Amine and polyamine biosynthesis; betaine biosynthesis via choline pathway; betaine aldehyde from choline (cytochrome c reductase route): step 1/1.</text>
</comment>
<comment type="similarity">
    <text evidence="1">Belongs to the GMC oxidoreductase family.</text>
</comment>
<evidence type="ECO:0000255" key="1">
    <source>
        <dbReference type="HAMAP-Rule" id="MF_00750"/>
    </source>
</evidence>
<organism>
    <name type="scientific">Staphylococcus aureus (strain JH9)</name>
    <dbReference type="NCBI Taxonomy" id="359786"/>
    <lineage>
        <taxon>Bacteria</taxon>
        <taxon>Bacillati</taxon>
        <taxon>Bacillota</taxon>
        <taxon>Bacilli</taxon>
        <taxon>Bacillales</taxon>
        <taxon>Staphylococcaceae</taxon>
        <taxon>Staphylococcus</taxon>
    </lineage>
</organism>
<keyword id="KW-0274">FAD</keyword>
<keyword id="KW-0285">Flavoprotein</keyword>
<keyword id="KW-0520">NAD</keyword>
<keyword id="KW-0560">Oxidoreductase</keyword>
<accession>A5IW37</accession>
<reference key="1">
    <citation type="submission" date="2007-05" db="EMBL/GenBank/DDBJ databases">
        <title>Complete sequence of chromosome of Staphylococcus aureus subsp. aureus JH9.</title>
        <authorList>
            <consortium name="US DOE Joint Genome Institute"/>
            <person name="Copeland A."/>
            <person name="Lucas S."/>
            <person name="Lapidus A."/>
            <person name="Barry K."/>
            <person name="Detter J.C."/>
            <person name="Glavina del Rio T."/>
            <person name="Hammon N."/>
            <person name="Israni S."/>
            <person name="Pitluck S."/>
            <person name="Chain P."/>
            <person name="Malfatti S."/>
            <person name="Shin M."/>
            <person name="Vergez L."/>
            <person name="Schmutz J."/>
            <person name="Larimer F."/>
            <person name="Land M."/>
            <person name="Hauser L."/>
            <person name="Kyrpides N."/>
            <person name="Kim E."/>
            <person name="Tomasz A."/>
            <person name="Richardson P."/>
        </authorList>
    </citation>
    <scope>NUCLEOTIDE SEQUENCE [LARGE SCALE GENOMIC DNA]</scope>
    <source>
        <strain>JH9</strain>
    </source>
</reference>
<name>BETA_STAA9</name>
<sequence>MSNKNKSYDYVIIGGGSAGSVLGNRLSEDKDKEVLVLEAGRSDYFWDLFIQMPAALMFPSGNKFYDWIYSTDEEPHMGGRKVAHARGKVLGGSSSINGMIYQRGNPMDYEGWAEPEGMETWDFAHCLPYFKKLEKTYGAAPYDKFRGHDGPIKLKRGPATNPLFQSFFDAGVEAGYHKTPDVNGFRQEGFGPFDSQVHRGRRMSASRAYLHPAMKRKNLTVETRAFVTEIHYEGRRATGVTYKKNGKLHTIDANEVILSGGAFNTPQLLQLSGIGDSEFLKSKGIEPRVHLPGVGENFEDHLEVYIQHKCKEPVSLQPSLDIKRMPFIGLQWIFTRTGAAASNHFEGGGFVRSNNEVDYPNLMFHFLPIAVRYDGQKAAVAHGYQVHVGPMYSNSRGSLKIKSKDPFEKPSIRFNYLSTEEDKKEWVEAIRVARNILSQKAMDPFNGGEISPGPEVQTDEEILDWVRRDGETALHPSCSAKMGPASDPMAVVDPLTMKVHGMENLRVVDASAMPRTTNGNIHAPVLMLAEKAADIIRGRKPLEPQYIDYYKHGVHDENEGAIEVKPYAK</sequence>
<gene>
    <name evidence="1" type="primary">betA</name>
    <name type="ordered locus">SaurJH9_2634</name>
</gene>
<feature type="chain" id="PRO_1000083497" description="Oxygen-dependent choline dehydrogenase">
    <location>
        <begin position="1"/>
        <end position="569"/>
    </location>
</feature>
<feature type="active site" description="Proton acceptor" evidence="1">
    <location>
        <position position="475"/>
    </location>
</feature>
<feature type="binding site" evidence="1">
    <location>
        <begin position="9"/>
        <end position="38"/>
    </location>
    <ligand>
        <name>FAD</name>
        <dbReference type="ChEBI" id="CHEBI:57692"/>
    </ligand>
</feature>